<accession>B1LFU5</accession>
<sequence length="376" mass="41044">MAKQDYYEILGVSKTAEEREIKKAYKRLAMKYHPDRNQGDKEAEAKFKEIKEAYEVLTDSQKRAAYDQYGHAAFEQGGMGGGGFGGGADFSDIFGDVFGDIFGGGRGRQRAARGADLRYNMELTLEEAVRGVTKEIRIPTLEECDVCHGSGAKPGTQPQTCPTCHGSGQVQMRQGFFAVQQTCPHCQGRGTLIKDPCNKCHGHGRVERSKTLSVKIPAGVDTGDRIRLAGEGEAGEHGAPAGDLYVQVQVKQHPIFEREGNNLYCEVPINFAMAALGGEIEVPTLDGRVKLKVPGETQTGKLFRMRGKGVKSVRGGAQGDLLCRVVVETPVGLNEKQKQLLQELQESFGGPTGEHNSPRSKSFFDGVKKFFDDLTR</sequence>
<organism>
    <name type="scientific">Escherichia coli (strain SMS-3-5 / SECEC)</name>
    <dbReference type="NCBI Taxonomy" id="439855"/>
    <lineage>
        <taxon>Bacteria</taxon>
        <taxon>Pseudomonadati</taxon>
        <taxon>Pseudomonadota</taxon>
        <taxon>Gammaproteobacteria</taxon>
        <taxon>Enterobacterales</taxon>
        <taxon>Enterobacteriaceae</taxon>
        <taxon>Escherichia</taxon>
    </lineage>
</organism>
<evidence type="ECO:0000255" key="1">
    <source>
        <dbReference type="HAMAP-Rule" id="MF_01152"/>
    </source>
</evidence>
<keyword id="KW-0143">Chaperone</keyword>
<keyword id="KW-0963">Cytoplasm</keyword>
<keyword id="KW-0235">DNA replication</keyword>
<keyword id="KW-0479">Metal-binding</keyword>
<keyword id="KW-0677">Repeat</keyword>
<keyword id="KW-0346">Stress response</keyword>
<keyword id="KW-0862">Zinc</keyword>
<keyword id="KW-0863">Zinc-finger</keyword>
<gene>
    <name evidence="1" type="primary">dnaJ</name>
    <name type="ordered locus">EcSMS35_0013</name>
</gene>
<proteinExistence type="inferred from homology"/>
<dbReference type="EMBL" id="CP000970">
    <property type="protein sequence ID" value="ACB19769.1"/>
    <property type="molecule type" value="Genomic_DNA"/>
</dbReference>
<dbReference type="RefSeq" id="WP_001118464.1">
    <property type="nucleotide sequence ID" value="NC_010498.1"/>
</dbReference>
<dbReference type="BMRB" id="B1LFU5"/>
<dbReference type="SMR" id="B1LFU5"/>
<dbReference type="GeneID" id="93777428"/>
<dbReference type="KEGG" id="ecm:EcSMS35_0013"/>
<dbReference type="HOGENOM" id="CLU_017633_0_7_6"/>
<dbReference type="Proteomes" id="UP000007011">
    <property type="component" value="Chromosome"/>
</dbReference>
<dbReference type="GO" id="GO:0005737">
    <property type="term" value="C:cytoplasm"/>
    <property type="evidence" value="ECO:0007669"/>
    <property type="project" value="UniProtKB-SubCell"/>
</dbReference>
<dbReference type="GO" id="GO:0005524">
    <property type="term" value="F:ATP binding"/>
    <property type="evidence" value="ECO:0007669"/>
    <property type="project" value="InterPro"/>
</dbReference>
<dbReference type="GO" id="GO:0031072">
    <property type="term" value="F:heat shock protein binding"/>
    <property type="evidence" value="ECO:0007669"/>
    <property type="project" value="InterPro"/>
</dbReference>
<dbReference type="GO" id="GO:0051082">
    <property type="term" value="F:unfolded protein binding"/>
    <property type="evidence" value="ECO:0007669"/>
    <property type="project" value="UniProtKB-UniRule"/>
</dbReference>
<dbReference type="GO" id="GO:0008270">
    <property type="term" value="F:zinc ion binding"/>
    <property type="evidence" value="ECO:0007669"/>
    <property type="project" value="UniProtKB-UniRule"/>
</dbReference>
<dbReference type="GO" id="GO:0051085">
    <property type="term" value="P:chaperone cofactor-dependent protein refolding"/>
    <property type="evidence" value="ECO:0007669"/>
    <property type="project" value="TreeGrafter"/>
</dbReference>
<dbReference type="GO" id="GO:0006260">
    <property type="term" value="P:DNA replication"/>
    <property type="evidence" value="ECO:0007669"/>
    <property type="project" value="UniProtKB-KW"/>
</dbReference>
<dbReference type="GO" id="GO:0042026">
    <property type="term" value="P:protein refolding"/>
    <property type="evidence" value="ECO:0007669"/>
    <property type="project" value="TreeGrafter"/>
</dbReference>
<dbReference type="GO" id="GO:0009408">
    <property type="term" value="P:response to heat"/>
    <property type="evidence" value="ECO:0007669"/>
    <property type="project" value="InterPro"/>
</dbReference>
<dbReference type="CDD" id="cd06257">
    <property type="entry name" value="DnaJ"/>
    <property type="match status" value="1"/>
</dbReference>
<dbReference type="CDD" id="cd10747">
    <property type="entry name" value="DnaJ_C"/>
    <property type="match status" value="1"/>
</dbReference>
<dbReference type="CDD" id="cd10719">
    <property type="entry name" value="DnaJ_zf"/>
    <property type="match status" value="1"/>
</dbReference>
<dbReference type="FunFam" id="1.10.287.110:FF:000003">
    <property type="entry name" value="Molecular chaperone DnaJ"/>
    <property type="match status" value="1"/>
</dbReference>
<dbReference type="FunFam" id="2.10.230.10:FF:000002">
    <property type="entry name" value="Molecular chaperone DnaJ"/>
    <property type="match status" value="1"/>
</dbReference>
<dbReference type="FunFam" id="2.60.260.20:FF:000004">
    <property type="entry name" value="Molecular chaperone DnaJ"/>
    <property type="match status" value="1"/>
</dbReference>
<dbReference type="Gene3D" id="1.10.287.110">
    <property type="entry name" value="DnaJ domain"/>
    <property type="match status" value="1"/>
</dbReference>
<dbReference type="Gene3D" id="2.10.230.10">
    <property type="entry name" value="Heat shock protein DnaJ, cysteine-rich domain"/>
    <property type="match status" value="1"/>
</dbReference>
<dbReference type="Gene3D" id="2.60.260.20">
    <property type="entry name" value="Urease metallochaperone UreE, N-terminal domain"/>
    <property type="match status" value="2"/>
</dbReference>
<dbReference type="HAMAP" id="MF_01152">
    <property type="entry name" value="DnaJ"/>
    <property type="match status" value="1"/>
</dbReference>
<dbReference type="InterPro" id="IPR012724">
    <property type="entry name" value="DnaJ"/>
</dbReference>
<dbReference type="InterPro" id="IPR002939">
    <property type="entry name" value="DnaJ_C"/>
</dbReference>
<dbReference type="InterPro" id="IPR001623">
    <property type="entry name" value="DnaJ_domain"/>
</dbReference>
<dbReference type="InterPro" id="IPR018253">
    <property type="entry name" value="DnaJ_domain_CS"/>
</dbReference>
<dbReference type="InterPro" id="IPR008971">
    <property type="entry name" value="HSP40/DnaJ_pept-bd"/>
</dbReference>
<dbReference type="InterPro" id="IPR001305">
    <property type="entry name" value="HSP_DnaJ_Cys-rich_dom"/>
</dbReference>
<dbReference type="InterPro" id="IPR036410">
    <property type="entry name" value="HSP_DnaJ_Cys-rich_dom_sf"/>
</dbReference>
<dbReference type="InterPro" id="IPR036869">
    <property type="entry name" value="J_dom_sf"/>
</dbReference>
<dbReference type="NCBIfam" id="TIGR02349">
    <property type="entry name" value="DnaJ_bact"/>
    <property type="match status" value="1"/>
</dbReference>
<dbReference type="NCBIfam" id="NF008035">
    <property type="entry name" value="PRK10767.1"/>
    <property type="match status" value="1"/>
</dbReference>
<dbReference type="PANTHER" id="PTHR43096:SF48">
    <property type="entry name" value="CHAPERONE PROTEIN DNAJ"/>
    <property type="match status" value="1"/>
</dbReference>
<dbReference type="PANTHER" id="PTHR43096">
    <property type="entry name" value="DNAJ HOMOLOG 1, MITOCHONDRIAL-RELATED"/>
    <property type="match status" value="1"/>
</dbReference>
<dbReference type="Pfam" id="PF00226">
    <property type="entry name" value="DnaJ"/>
    <property type="match status" value="1"/>
</dbReference>
<dbReference type="Pfam" id="PF01556">
    <property type="entry name" value="DnaJ_C"/>
    <property type="match status" value="1"/>
</dbReference>
<dbReference type="Pfam" id="PF00684">
    <property type="entry name" value="DnaJ_CXXCXGXG"/>
    <property type="match status" value="1"/>
</dbReference>
<dbReference type="PRINTS" id="PR00625">
    <property type="entry name" value="JDOMAIN"/>
</dbReference>
<dbReference type="SMART" id="SM00271">
    <property type="entry name" value="DnaJ"/>
    <property type="match status" value="1"/>
</dbReference>
<dbReference type="SUPFAM" id="SSF46565">
    <property type="entry name" value="Chaperone J-domain"/>
    <property type="match status" value="1"/>
</dbReference>
<dbReference type="SUPFAM" id="SSF57938">
    <property type="entry name" value="DnaJ/Hsp40 cysteine-rich domain"/>
    <property type="match status" value="1"/>
</dbReference>
<dbReference type="SUPFAM" id="SSF49493">
    <property type="entry name" value="HSP40/DnaJ peptide-binding domain"/>
    <property type="match status" value="2"/>
</dbReference>
<dbReference type="PROSITE" id="PS00636">
    <property type="entry name" value="DNAJ_1"/>
    <property type="match status" value="1"/>
</dbReference>
<dbReference type="PROSITE" id="PS50076">
    <property type="entry name" value="DNAJ_2"/>
    <property type="match status" value="1"/>
</dbReference>
<dbReference type="PROSITE" id="PS51188">
    <property type="entry name" value="ZF_CR"/>
    <property type="match status" value="1"/>
</dbReference>
<feature type="chain" id="PRO_1000137689" description="Chaperone protein DnaJ">
    <location>
        <begin position="1"/>
        <end position="376"/>
    </location>
</feature>
<feature type="domain" description="J" evidence="1">
    <location>
        <begin position="5"/>
        <end position="70"/>
    </location>
</feature>
<feature type="repeat" description="CXXCXGXG motif">
    <location>
        <begin position="144"/>
        <end position="151"/>
    </location>
</feature>
<feature type="repeat" description="CXXCXGXG motif">
    <location>
        <begin position="161"/>
        <end position="168"/>
    </location>
</feature>
<feature type="repeat" description="CXXCXGXG motif">
    <location>
        <begin position="183"/>
        <end position="190"/>
    </location>
</feature>
<feature type="repeat" description="CXXCXGXG motif">
    <location>
        <begin position="197"/>
        <end position="204"/>
    </location>
</feature>
<feature type="zinc finger region" description="CR-type" evidence="1">
    <location>
        <begin position="131"/>
        <end position="209"/>
    </location>
</feature>
<feature type="binding site" evidence="1">
    <location>
        <position position="144"/>
    </location>
    <ligand>
        <name>Zn(2+)</name>
        <dbReference type="ChEBI" id="CHEBI:29105"/>
        <label>1</label>
    </ligand>
</feature>
<feature type="binding site" evidence="1">
    <location>
        <position position="147"/>
    </location>
    <ligand>
        <name>Zn(2+)</name>
        <dbReference type="ChEBI" id="CHEBI:29105"/>
        <label>1</label>
    </ligand>
</feature>
<feature type="binding site" evidence="1">
    <location>
        <position position="161"/>
    </location>
    <ligand>
        <name>Zn(2+)</name>
        <dbReference type="ChEBI" id="CHEBI:29105"/>
        <label>2</label>
    </ligand>
</feature>
<feature type="binding site" evidence="1">
    <location>
        <position position="164"/>
    </location>
    <ligand>
        <name>Zn(2+)</name>
        <dbReference type="ChEBI" id="CHEBI:29105"/>
        <label>2</label>
    </ligand>
</feature>
<feature type="binding site" evidence="1">
    <location>
        <position position="183"/>
    </location>
    <ligand>
        <name>Zn(2+)</name>
        <dbReference type="ChEBI" id="CHEBI:29105"/>
        <label>2</label>
    </ligand>
</feature>
<feature type="binding site" evidence="1">
    <location>
        <position position="186"/>
    </location>
    <ligand>
        <name>Zn(2+)</name>
        <dbReference type="ChEBI" id="CHEBI:29105"/>
        <label>2</label>
    </ligand>
</feature>
<feature type="binding site" evidence="1">
    <location>
        <position position="197"/>
    </location>
    <ligand>
        <name>Zn(2+)</name>
        <dbReference type="ChEBI" id="CHEBI:29105"/>
        <label>1</label>
    </ligand>
</feature>
<feature type="binding site" evidence="1">
    <location>
        <position position="200"/>
    </location>
    <ligand>
        <name>Zn(2+)</name>
        <dbReference type="ChEBI" id="CHEBI:29105"/>
        <label>1</label>
    </ligand>
</feature>
<comment type="function">
    <text evidence="1">Participates actively in the response to hyperosmotic and heat shock by preventing the aggregation of stress-denatured proteins and by disaggregating proteins, also in an autonomous, DnaK-independent fashion. Unfolded proteins bind initially to DnaJ; upon interaction with the DnaJ-bound protein, DnaK hydrolyzes its bound ATP, resulting in the formation of a stable complex. GrpE releases ADP from DnaK; ATP binding to DnaK triggers the release of the substrate protein, thus completing the reaction cycle. Several rounds of ATP-dependent interactions between DnaJ, DnaK and GrpE are required for fully efficient folding. Also involved, together with DnaK and GrpE, in the DNA replication of plasmids through activation of initiation proteins.</text>
</comment>
<comment type="cofactor">
    <cofactor evidence="1">
        <name>Zn(2+)</name>
        <dbReference type="ChEBI" id="CHEBI:29105"/>
    </cofactor>
    <text evidence="1">Binds 2 Zn(2+) ions per monomer.</text>
</comment>
<comment type="subunit">
    <text evidence="1">Homodimer.</text>
</comment>
<comment type="subcellular location">
    <subcellularLocation>
        <location evidence="1">Cytoplasm</location>
    </subcellularLocation>
</comment>
<comment type="domain">
    <text evidence="1">The J domain is necessary and sufficient to stimulate DnaK ATPase activity. Zinc center 1 plays an important role in the autonomous, DnaK-independent chaperone activity of DnaJ. Zinc center 2 is essential for interaction with DnaK and for DnaJ activity.</text>
</comment>
<comment type="similarity">
    <text evidence="1">Belongs to the DnaJ family.</text>
</comment>
<protein>
    <recommendedName>
        <fullName evidence="1">Chaperone protein DnaJ</fullName>
    </recommendedName>
</protein>
<name>DNAJ_ECOSM</name>
<reference key="1">
    <citation type="journal article" date="2008" name="J. Bacteriol.">
        <title>Insights into the environmental resistance gene pool from the genome sequence of the multidrug-resistant environmental isolate Escherichia coli SMS-3-5.</title>
        <authorList>
            <person name="Fricke W.F."/>
            <person name="Wright M.S."/>
            <person name="Lindell A.H."/>
            <person name="Harkins D.M."/>
            <person name="Baker-Austin C."/>
            <person name="Ravel J."/>
            <person name="Stepanauskas R."/>
        </authorList>
    </citation>
    <scope>NUCLEOTIDE SEQUENCE [LARGE SCALE GENOMIC DNA]</scope>
    <source>
        <strain>SMS-3-5 / SECEC</strain>
    </source>
</reference>